<organism>
    <name type="scientific">Nicotiana tabacum</name>
    <name type="common">Common tobacco</name>
    <dbReference type="NCBI Taxonomy" id="4097"/>
    <lineage>
        <taxon>Eukaryota</taxon>
        <taxon>Viridiplantae</taxon>
        <taxon>Streptophyta</taxon>
        <taxon>Embryophyta</taxon>
        <taxon>Tracheophyta</taxon>
        <taxon>Spermatophyta</taxon>
        <taxon>Magnoliopsida</taxon>
        <taxon>eudicotyledons</taxon>
        <taxon>Gunneridae</taxon>
        <taxon>Pentapetalae</taxon>
        <taxon>asterids</taxon>
        <taxon>lamiids</taxon>
        <taxon>Solanales</taxon>
        <taxon>Solanaceae</taxon>
        <taxon>Nicotianoideae</taxon>
        <taxon>Nicotianeae</taxon>
        <taxon>Nicotiana</taxon>
    </lineage>
</organism>
<keyword id="KW-0067">ATP-binding</keyword>
<keyword id="KW-0963">Cytoplasm</keyword>
<keyword id="KW-0324">Glycolysis</keyword>
<keyword id="KW-0418">Kinase</keyword>
<keyword id="KW-0460">Magnesium</keyword>
<keyword id="KW-0479">Metal-binding</keyword>
<keyword id="KW-0547">Nucleotide-binding</keyword>
<keyword id="KW-1185">Reference proteome</keyword>
<keyword id="KW-0808">Transferase</keyword>
<accession>Q42962</accession>
<sequence length="401" mass="42364">MAVKKSVGSLKEADLKGKRVFVRVDLNVPLDENFNITDDTRIRAAVPTIKYLMQHGSHVILASHLGRPKGVTPKYSLKPLVPRLSELLGVEVKIANDSIGPEVEKLVAEIPEGGVLLLENVRFYKEEEKNEPEFAKKLASLADLYVNDAFGTAHRAHASTEGVAKYLKPAVAGFLMQKELDYLVGAVANPQKPFAAIVGGSKVSSKIGVIESLLEKVDVLLLGGGMIFTFYKAQGYAVGSSLVEEDKLDLATSLMEKAKAKGVSLLLPTDVVIADKFAADANSKVVPASEIPDGWMGLDIGPDAIKSFGSALDTTKTVIWNGPMGVFEFDKFAAGTEAIAKKLAELSGKGVTTIIGGGDSVAAVEKVGLAEKMSHISTGGGASLELLEGKPLPGVLALDDA</sequence>
<dbReference type="EC" id="2.7.2.3" evidence="1"/>
<dbReference type="EMBL" id="Z48976">
    <property type="protein sequence ID" value="CAA88840.1"/>
    <property type="molecule type" value="mRNA"/>
</dbReference>
<dbReference type="PIR" id="T03661">
    <property type="entry name" value="T03661"/>
</dbReference>
<dbReference type="RefSeq" id="NP_001312375.1">
    <property type="nucleotide sequence ID" value="NM_001325446.1"/>
</dbReference>
<dbReference type="SMR" id="Q42962"/>
<dbReference type="STRING" id="4097.Q42962"/>
<dbReference type="PaxDb" id="4097-Q42962"/>
<dbReference type="ProMEX" id="Q42962"/>
<dbReference type="GeneID" id="107787830"/>
<dbReference type="KEGG" id="nta:107787830"/>
<dbReference type="OMA" id="CCFEERE"/>
<dbReference type="OrthoDB" id="275353at2759"/>
<dbReference type="PhylomeDB" id="Q42962"/>
<dbReference type="UniPathway" id="UPA00109">
    <property type="reaction ID" value="UER00185"/>
</dbReference>
<dbReference type="Proteomes" id="UP000084051">
    <property type="component" value="Unplaced"/>
</dbReference>
<dbReference type="GO" id="GO:0005829">
    <property type="term" value="C:cytosol"/>
    <property type="evidence" value="ECO:0000318"/>
    <property type="project" value="GO_Central"/>
</dbReference>
<dbReference type="GO" id="GO:0043531">
    <property type="term" value="F:ADP binding"/>
    <property type="evidence" value="ECO:0000318"/>
    <property type="project" value="GO_Central"/>
</dbReference>
<dbReference type="GO" id="GO:0005524">
    <property type="term" value="F:ATP binding"/>
    <property type="evidence" value="ECO:0000318"/>
    <property type="project" value="GO_Central"/>
</dbReference>
<dbReference type="GO" id="GO:0046872">
    <property type="term" value="F:metal ion binding"/>
    <property type="evidence" value="ECO:0007669"/>
    <property type="project" value="UniProtKB-KW"/>
</dbReference>
<dbReference type="GO" id="GO:0004618">
    <property type="term" value="F:phosphoglycerate kinase activity"/>
    <property type="evidence" value="ECO:0000318"/>
    <property type="project" value="GO_Central"/>
</dbReference>
<dbReference type="GO" id="GO:0006094">
    <property type="term" value="P:gluconeogenesis"/>
    <property type="evidence" value="ECO:0000318"/>
    <property type="project" value="GO_Central"/>
</dbReference>
<dbReference type="GO" id="GO:0006096">
    <property type="term" value="P:glycolytic process"/>
    <property type="evidence" value="ECO:0000318"/>
    <property type="project" value="GO_Central"/>
</dbReference>
<dbReference type="CDD" id="cd00318">
    <property type="entry name" value="Phosphoglycerate_kinase"/>
    <property type="match status" value="1"/>
</dbReference>
<dbReference type="FunFam" id="3.40.50.1260:FF:000003">
    <property type="entry name" value="Phosphoglycerate kinase"/>
    <property type="match status" value="1"/>
</dbReference>
<dbReference type="FunFam" id="3.40.50.1260:FF:000006">
    <property type="entry name" value="Phosphoglycerate kinase"/>
    <property type="match status" value="1"/>
</dbReference>
<dbReference type="Gene3D" id="3.40.50.1260">
    <property type="entry name" value="Phosphoglycerate kinase, N-terminal domain"/>
    <property type="match status" value="2"/>
</dbReference>
<dbReference type="HAMAP" id="MF_00145">
    <property type="entry name" value="Phosphoglyc_kinase"/>
    <property type="match status" value="1"/>
</dbReference>
<dbReference type="InterPro" id="IPR001576">
    <property type="entry name" value="Phosphoglycerate_kinase"/>
</dbReference>
<dbReference type="InterPro" id="IPR015911">
    <property type="entry name" value="Phosphoglycerate_kinase_CS"/>
</dbReference>
<dbReference type="InterPro" id="IPR015824">
    <property type="entry name" value="Phosphoglycerate_kinase_N"/>
</dbReference>
<dbReference type="InterPro" id="IPR036043">
    <property type="entry name" value="Phosphoglycerate_kinase_sf"/>
</dbReference>
<dbReference type="PANTHER" id="PTHR11406">
    <property type="entry name" value="PHOSPHOGLYCERATE KINASE"/>
    <property type="match status" value="1"/>
</dbReference>
<dbReference type="PANTHER" id="PTHR11406:SF27">
    <property type="entry name" value="PHOSPHOGLYCERATE KINASE 3, CYTOSOLIC"/>
    <property type="match status" value="1"/>
</dbReference>
<dbReference type="Pfam" id="PF00162">
    <property type="entry name" value="PGK"/>
    <property type="match status" value="1"/>
</dbReference>
<dbReference type="PIRSF" id="PIRSF000724">
    <property type="entry name" value="Pgk"/>
    <property type="match status" value="1"/>
</dbReference>
<dbReference type="PRINTS" id="PR00477">
    <property type="entry name" value="PHGLYCKINASE"/>
</dbReference>
<dbReference type="SUPFAM" id="SSF53748">
    <property type="entry name" value="Phosphoglycerate kinase"/>
    <property type="match status" value="1"/>
</dbReference>
<dbReference type="PROSITE" id="PS00111">
    <property type="entry name" value="PGLYCERATE_KINASE"/>
    <property type="match status" value="1"/>
</dbReference>
<evidence type="ECO:0000250" key="1">
    <source>
        <dbReference type="UniProtKB" id="P00558"/>
    </source>
</evidence>
<evidence type="ECO:0000250" key="2">
    <source>
        <dbReference type="UniProtKB" id="Q7SIB7"/>
    </source>
</evidence>
<evidence type="ECO:0000305" key="3"/>
<name>PGKY_TOBAC</name>
<feature type="chain" id="PRO_0000145871" description="Phosphoglycerate kinase, cytosolic">
    <location>
        <begin position="1"/>
        <end position="401"/>
    </location>
</feature>
<feature type="binding site" evidence="1">
    <location>
        <position position="24"/>
    </location>
    <ligand>
        <name>(2R)-3-phosphoglycerate</name>
        <dbReference type="ChEBI" id="CHEBI:58272"/>
    </ligand>
</feature>
<feature type="binding site" evidence="2">
    <location>
        <position position="25"/>
    </location>
    <ligand>
        <name>(2R)-3-phosphoglycerate</name>
        <dbReference type="ChEBI" id="CHEBI:58272"/>
    </ligand>
</feature>
<feature type="binding site" evidence="2">
    <location>
        <position position="27"/>
    </location>
    <ligand>
        <name>(2R)-3-phosphoglycerate</name>
        <dbReference type="ChEBI" id="CHEBI:58272"/>
    </ligand>
</feature>
<feature type="binding site" evidence="2">
    <location>
        <position position="41"/>
    </location>
    <ligand>
        <name>(2R)-3-phosphoglycerate</name>
        <dbReference type="ChEBI" id="CHEBI:58272"/>
    </ligand>
</feature>
<feature type="binding site" evidence="1">
    <location>
        <position position="63"/>
    </location>
    <ligand>
        <name>(2R)-3-phosphoglycerate</name>
        <dbReference type="ChEBI" id="CHEBI:58272"/>
    </ligand>
</feature>
<feature type="binding site" evidence="2">
    <location>
        <position position="64"/>
    </location>
    <ligand>
        <name>(2R)-3-phosphoglycerate</name>
        <dbReference type="ChEBI" id="CHEBI:58272"/>
    </ligand>
</feature>
<feature type="binding site" evidence="1">
    <location>
        <position position="66"/>
    </location>
    <ligand>
        <name>(2R)-3-phosphoglycerate</name>
        <dbReference type="ChEBI" id="CHEBI:58272"/>
    </ligand>
</feature>
<feature type="binding site" evidence="2">
    <location>
        <position position="67"/>
    </location>
    <ligand>
        <name>(2R)-3-phosphoglycerate</name>
        <dbReference type="ChEBI" id="CHEBI:58272"/>
    </ligand>
</feature>
<feature type="binding site" evidence="2">
    <location>
        <position position="122"/>
    </location>
    <ligand>
        <name>(2R)-3-phosphoglycerate</name>
        <dbReference type="ChEBI" id="CHEBI:58272"/>
    </ligand>
</feature>
<feature type="binding site" evidence="1">
    <location>
        <position position="154"/>
    </location>
    <ligand>
        <name>(2R)-3-phosphoglycerate</name>
        <dbReference type="ChEBI" id="CHEBI:58272"/>
    </ligand>
</feature>
<feature type="binding site" evidence="2">
    <location>
        <position position="155"/>
    </location>
    <ligand>
        <name>(2R)-3-phosphoglycerate</name>
        <dbReference type="ChEBI" id="CHEBI:58272"/>
    </ligand>
</feature>
<feature type="binding site" evidence="1">
    <location>
        <position position="200"/>
    </location>
    <ligand>
        <name>ADP</name>
        <dbReference type="ChEBI" id="CHEBI:456216"/>
    </ligand>
</feature>
<feature type="binding site" evidence="1">
    <location>
        <position position="200"/>
    </location>
    <ligand>
        <name>CDP</name>
        <dbReference type="ChEBI" id="CHEBI:58069"/>
    </ligand>
</feature>
<feature type="binding site" evidence="2">
    <location>
        <position position="202"/>
    </location>
    <ligand>
        <name>AMP</name>
        <dbReference type="ChEBI" id="CHEBI:456215"/>
    </ligand>
</feature>
<feature type="binding site" evidence="2">
    <location>
        <position position="206"/>
    </location>
    <ligand>
        <name>AMP</name>
        <dbReference type="ChEBI" id="CHEBI:456215"/>
    </ligand>
</feature>
<feature type="binding site" evidence="2">
    <location>
        <position position="206"/>
    </location>
    <ligand>
        <name>ATP</name>
        <dbReference type="ChEBI" id="CHEBI:30616"/>
    </ligand>
</feature>
<feature type="binding site" evidence="1">
    <location>
        <position position="224"/>
    </location>
    <ligand>
        <name>ADP</name>
        <dbReference type="ChEBI" id="CHEBI:456216"/>
    </ligand>
</feature>
<feature type="binding site" evidence="1">
    <location>
        <position position="224"/>
    </location>
    <ligand>
        <name>CDP</name>
        <dbReference type="ChEBI" id="CHEBI:58069"/>
    </ligand>
</feature>
<feature type="binding site" evidence="2">
    <location>
        <position position="225"/>
    </location>
    <ligand>
        <name>AMP</name>
        <dbReference type="ChEBI" id="CHEBI:456215"/>
    </ligand>
</feature>
<feature type="binding site" evidence="2">
    <location>
        <position position="225"/>
    </location>
    <ligand>
        <name>ATP</name>
        <dbReference type="ChEBI" id="CHEBI:30616"/>
    </ligand>
</feature>
<feature type="binding site" evidence="2">
    <location>
        <position position="297"/>
    </location>
    <ligand>
        <name>AMP</name>
        <dbReference type="ChEBI" id="CHEBI:456215"/>
    </ligand>
</feature>
<feature type="binding site" evidence="2">
    <location>
        <position position="297"/>
    </location>
    <ligand>
        <name>ATP</name>
        <dbReference type="ChEBI" id="CHEBI:30616"/>
    </ligand>
</feature>
<feature type="binding site" evidence="1">
    <location>
        <position position="322"/>
    </location>
    <ligand>
        <name>CDP</name>
        <dbReference type="ChEBI" id="CHEBI:58069"/>
    </ligand>
</feature>
<feature type="binding site" evidence="1">
    <location>
        <position position="327"/>
    </location>
    <ligand>
        <name>ADP</name>
        <dbReference type="ChEBI" id="CHEBI:456216"/>
    </ligand>
</feature>
<feature type="binding site" evidence="1">
    <location>
        <position position="327"/>
    </location>
    <ligand>
        <name>CDP</name>
        <dbReference type="ChEBI" id="CHEBI:58069"/>
    </ligand>
</feature>
<feature type="binding site" evidence="2">
    <location>
        <position position="328"/>
    </location>
    <ligand>
        <name>AMP</name>
        <dbReference type="ChEBI" id="CHEBI:456215"/>
    </ligand>
</feature>
<feature type="binding site" evidence="2">
    <location>
        <position position="328"/>
    </location>
    <ligand>
        <name>ATP</name>
        <dbReference type="ChEBI" id="CHEBI:30616"/>
    </ligand>
</feature>
<feature type="binding site" evidence="2">
    <location>
        <position position="359"/>
    </location>
    <ligand>
        <name>ATP</name>
        <dbReference type="ChEBI" id="CHEBI:30616"/>
    </ligand>
</feature>
<feature type="binding site" evidence="2">
    <location>
        <position position="359"/>
    </location>
    <ligand>
        <name>Mg(2+)</name>
        <dbReference type="ChEBI" id="CHEBI:18420"/>
    </ligand>
</feature>
<feature type="binding site" evidence="2">
    <location>
        <position position="360"/>
    </location>
    <ligand>
        <name>ATP</name>
        <dbReference type="ChEBI" id="CHEBI:30616"/>
    </ligand>
</feature>
<reference key="1">
    <citation type="online journal article" date="1995" name="Plant Gene Register">
        <title>Nucleotide sequences of cDNAs encoding the chloroplastic and cytosolic phosphoglycerate kinases from tobacco.</title>
        <authorList>
            <person name="Rao S.K."/>
            <person name="Bringloe D.H."/>
            <person name="Dyer T.A."/>
            <person name="Raines C.A."/>
            <person name="Bradbeer J.W."/>
        </authorList>
        <locator>PGR95-090</locator>
    </citation>
    <scope>NUCLEOTIDE SEQUENCE [MRNA]</scope>
    <source>
        <strain>cv. Samsun</strain>
        <tissue>Leaf</tissue>
    </source>
</reference>
<protein>
    <recommendedName>
        <fullName>Phosphoglycerate kinase, cytosolic</fullName>
        <ecNumber evidence="1">2.7.2.3</ecNumber>
    </recommendedName>
</protein>
<proteinExistence type="evidence at transcript level"/>
<comment type="catalytic activity">
    <reaction evidence="1">
        <text>(2R)-3-phosphoglycerate + ATP = (2R)-3-phospho-glyceroyl phosphate + ADP</text>
        <dbReference type="Rhea" id="RHEA:14801"/>
        <dbReference type="ChEBI" id="CHEBI:30616"/>
        <dbReference type="ChEBI" id="CHEBI:57604"/>
        <dbReference type="ChEBI" id="CHEBI:58272"/>
        <dbReference type="ChEBI" id="CHEBI:456216"/>
        <dbReference type="EC" id="2.7.2.3"/>
    </reaction>
</comment>
<comment type="cofactor">
    <cofactor evidence="1">
        <name>Mg(2+)</name>
        <dbReference type="ChEBI" id="CHEBI:18420"/>
    </cofactor>
</comment>
<comment type="pathway">
    <text>Carbohydrate degradation; glycolysis; pyruvate from D-glyceraldehyde 3-phosphate: step 2/5.</text>
</comment>
<comment type="subunit">
    <text>Monomer.</text>
</comment>
<comment type="subcellular location">
    <subcellularLocation>
        <location>Cytoplasm</location>
    </subcellularLocation>
</comment>
<comment type="similarity">
    <text evidence="3">Belongs to the phosphoglycerate kinase family.</text>
</comment>